<feature type="chain" id="PRO_0000411797" description="Probable Xaa-Pro aminopeptidase P">
    <location>
        <begin position="1"/>
        <end position="619"/>
    </location>
</feature>
<feature type="binding site" evidence="1">
    <location>
        <position position="415"/>
    </location>
    <ligand>
        <name>Mn(2+)</name>
        <dbReference type="ChEBI" id="CHEBI:29035"/>
        <label>2</label>
    </ligand>
</feature>
<feature type="binding site" evidence="1">
    <location>
        <position position="426"/>
    </location>
    <ligand>
        <name>Mn(2+)</name>
        <dbReference type="ChEBI" id="CHEBI:29035"/>
        <label>1</label>
    </ligand>
</feature>
<feature type="binding site" evidence="1">
    <location>
        <position position="426"/>
    </location>
    <ligand>
        <name>Mn(2+)</name>
        <dbReference type="ChEBI" id="CHEBI:29035"/>
        <label>2</label>
    </ligand>
</feature>
<feature type="binding site" evidence="1">
    <location>
        <position position="524"/>
    </location>
    <ligand>
        <name>Mn(2+)</name>
        <dbReference type="ChEBI" id="CHEBI:29035"/>
        <label>1</label>
    </ligand>
</feature>
<feature type="binding site" evidence="1">
    <location>
        <position position="538"/>
    </location>
    <ligand>
        <name>Mn(2+)</name>
        <dbReference type="ChEBI" id="CHEBI:29035"/>
        <label>1</label>
    </ligand>
</feature>
<feature type="binding site" evidence="1">
    <location>
        <position position="538"/>
    </location>
    <ligand>
        <name>Mn(2+)</name>
        <dbReference type="ChEBI" id="CHEBI:29035"/>
        <label>2</label>
    </ligand>
</feature>
<proteinExistence type="inferred from homology"/>
<organism>
    <name type="scientific">Fusarium vanettenii (strain ATCC MYA-4622 / CBS 123669 / FGSC 9596 / NRRL 45880 / 77-13-4)</name>
    <name type="common">Fusarium solani subsp. pisi</name>
    <dbReference type="NCBI Taxonomy" id="660122"/>
    <lineage>
        <taxon>Eukaryota</taxon>
        <taxon>Fungi</taxon>
        <taxon>Dikarya</taxon>
        <taxon>Ascomycota</taxon>
        <taxon>Pezizomycotina</taxon>
        <taxon>Sordariomycetes</taxon>
        <taxon>Hypocreomycetidae</taxon>
        <taxon>Hypocreales</taxon>
        <taxon>Nectriaceae</taxon>
        <taxon>Fusarium</taxon>
        <taxon>Fusarium solani species complex</taxon>
        <taxon>Fusarium vanettenii</taxon>
    </lineage>
</organism>
<reference key="1">
    <citation type="journal article" date="2009" name="PLoS Genet.">
        <title>The genome of Nectria haematococca: contribution of supernumerary chromosomes to gene expansion.</title>
        <authorList>
            <person name="Coleman J.J."/>
            <person name="Rounsley S.D."/>
            <person name="Rodriguez-Carres M."/>
            <person name="Kuo A."/>
            <person name="Wasmann C.C."/>
            <person name="Grimwood J."/>
            <person name="Schmutz J."/>
            <person name="Taga M."/>
            <person name="White G.J."/>
            <person name="Zhou S."/>
            <person name="Schwartz D.C."/>
            <person name="Freitag M."/>
            <person name="Ma L.-J."/>
            <person name="Danchin E.G.J."/>
            <person name="Henrissat B."/>
            <person name="Coutinho P.M."/>
            <person name="Nelson D.R."/>
            <person name="Straney D."/>
            <person name="Napoli C.A."/>
            <person name="Barker B.M."/>
            <person name="Gribskov M."/>
            <person name="Rep M."/>
            <person name="Kroken S."/>
            <person name="Molnar I."/>
            <person name="Rensing C."/>
            <person name="Kennell J.C."/>
            <person name="Zamora J."/>
            <person name="Farman M.L."/>
            <person name="Selker E.U."/>
            <person name="Salamov A."/>
            <person name="Shapiro H."/>
            <person name="Pangilinan J."/>
            <person name="Lindquist E."/>
            <person name="Lamers C."/>
            <person name="Grigoriev I.V."/>
            <person name="Geiser D.M."/>
            <person name="Covert S.F."/>
            <person name="Temporini E."/>
            <person name="VanEtten H.D."/>
        </authorList>
    </citation>
    <scope>NUCLEOTIDE SEQUENCE [LARGE SCALE GENOMIC DNA]</scope>
    <source>
        <strain>ATCC MYA-4622 / CBS 123669 / FGSC 9596 / NRRL 45880 / 77-13-4</strain>
    </source>
</reference>
<gene>
    <name type="primary">AMPP</name>
    <name type="ORF">NECHADRAFT_70478</name>
</gene>
<accession>C7Z9Z7</accession>
<keyword id="KW-0031">Aminopeptidase</keyword>
<keyword id="KW-0378">Hydrolase</keyword>
<keyword id="KW-0464">Manganese</keyword>
<keyword id="KW-0479">Metal-binding</keyword>
<keyword id="KW-0482">Metalloprotease</keyword>
<keyword id="KW-0645">Protease</keyword>
<keyword id="KW-1185">Reference proteome</keyword>
<comment type="function">
    <text evidence="1">Catalyzes the removal of a penultimate prolyl residue from the N-termini of peptides.</text>
</comment>
<comment type="catalytic activity">
    <reaction>
        <text>Release of any N-terminal amino acid, including proline, that is linked to proline, even from a dipeptide or tripeptide.</text>
        <dbReference type="EC" id="3.4.11.9"/>
    </reaction>
</comment>
<comment type="cofactor">
    <cofactor evidence="1">
        <name>Mn(2+)</name>
        <dbReference type="ChEBI" id="CHEBI:29035"/>
    </cofactor>
    <text evidence="1">Binds 2 manganese ions per subunit.</text>
</comment>
<comment type="similarity">
    <text evidence="2">Belongs to the peptidase M24B family.</text>
</comment>
<name>AMPP1_FUSV7</name>
<evidence type="ECO:0000250" key="1"/>
<evidence type="ECO:0000305" key="2"/>
<protein>
    <recommendedName>
        <fullName>Probable Xaa-Pro aminopeptidase P</fullName>
        <shortName>AMPP</shortName>
        <shortName>Aminopeptidase P</shortName>
        <ecNumber>3.4.11.9</ecNumber>
    </recommendedName>
    <alternativeName>
        <fullName>Aminoacylproline aminopeptidase</fullName>
    </alternativeName>
    <alternativeName>
        <fullName>Prolidase</fullName>
    </alternativeName>
</protein>
<sequence length="619" mass="67859">MAKIDTTSRLTSLRGFMKERNVQVYIIPSEDSHSSEYIADCDARREHISGFTGSAGCAVVTLETAALATDGRYFNQAAAQLDSNWTLLKQGLQDVPTWQEWSAEQSSGGKNVGVDPSLISGATAKNLAEKIRKSGGAELVPIEGNLVDLVWGKERPARPSEKVIVQPDELAGESVTNKLTKLRQELEKKRSPGFLVSMLDEIAWLFNLRGNDIPFNPVFFSYAIVTPDVATLYIDDSKLDDKCRSHLSANKVEIKPYDSILDDARKLHASVSEKGKSENAAPTGNFLISNKGSWALKRALGGDSSVDEIRSPVGDAKAIKSEAELVGMRACHVRDGAALIQYFAWLEDQLVNKKATLDEVEAADKLEELRSQKSDFVGLSFPTISSTGANAAIIHYGPERGSCATIDPEAIYLCDSGAQYHDGTTDTTRTLHFGTPTEAEREAYTLVLKGHIALDQAVFPKGTTGFALDGLARQHLWKNGLDYRHGTGHGVGSFLNVHEGPIGIGTRVQFAEVALAPGNVLSNEPGYYEDGKYGIRIENIVVVKEIKTKHKFGDKPFLGFEHVTMVPYCRNLIDTKLLTSEEKEWLNAYNAKVVDKTQGYFEGDDVTLAWLKRETAQVE</sequence>
<dbReference type="EC" id="3.4.11.9"/>
<dbReference type="EMBL" id="GG698912">
    <property type="protein sequence ID" value="EEU39591.1"/>
    <property type="molecule type" value="Genomic_DNA"/>
</dbReference>
<dbReference type="RefSeq" id="XP_003045304.1">
    <property type="nucleotide sequence ID" value="XM_003045258.1"/>
</dbReference>
<dbReference type="SMR" id="C7Z9Z7"/>
<dbReference type="FunCoup" id="C7Z9Z7">
    <property type="interactions" value="398"/>
</dbReference>
<dbReference type="STRING" id="660122.C7Z9Z7"/>
<dbReference type="EnsemblFungi" id="NechaT70478">
    <property type="protein sequence ID" value="NechaP70478"/>
    <property type="gene ID" value="NechaG70478"/>
</dbReference>
<dbReference type="GeneID" id="9672080"/>
<dbReference type="KEGG" id="nhe:NECHADRAFT_70478"/>
<dbReference type="VEuPathDB" id="FungiDB:NECHADRAFT_70478"/>
<dbReference type="eggNOG" id="KOG2413">
    <property type="taxonomic scope" value="Eukaryota"/>
</dbReference>
<dbReference type="HOGENOM" id="CLU_011781_2_2_1"/>
<dbReference type="InParanoid" id="C7Z9Z7"/>
<dbReference type="OMA" id="EPGMILS"/>
<dbReference type="OrthoDB" id="9995434at2759"/>
<dbReference type="Proteomes" id="UP000005206">
    <property type="component" value="Unassembled WGS sequence"/>
</dbReference>
<dbReference type="GO" id="GO:0005737">
    <property type="term" value="C:cytoplasm"/>
    <property type="evidence" value="ECO:0007669"/>
    <property type="project" value="UniProtKB-ARBA"/>
</dbReference>
<dbReference type="GO" id="GO:0046872">
    <property type="term" value="F:metal ion binding"/>
    <property type="evidence" value="ECO:0007669"/>
    <property type="project" value="UniProtKB-KW"/>
</dbReference>
<dbReference type="GO" id="GO:0070006">
    <property type="term" value="F:metalloaminopeptidase activity"/>
    <property type="evidence" value="ECO:0007669"/>
    <property type="project" value="InterPro"/>
</dbReference>
<dbReference type="GO" id="GO:0006508">
    <property type="term" value="P:proteolysis"/>
    <property type="evidence" value="ECO:0007669"/>
    <property type="project" value="UniProtKB-KW"/>
</dbReference>
<dbReference type="CDD" id="cd01085">
    <property type="entry name" value="APP"/>
    <property type="match status" value="1"/>
</dbReference>
<dbReference type="FunFam" id="3.40.350.10:FF:000010">
    <property type="entry name" value="Probable Xaa-Pro aminopeptidase P"/>
    <property type="match status" value="1"/>
</dbReference>
<dbReference type="FunFam" id="3.90.230.10:FF:000007">
    <property type="entry name" value="Xaa-Pro aminopeptidase P"/>
    <property type="match status" value="1"/>
</dbReference>
<dbReference type="FunFam" id="3.40.350.10:FF:000003">
    <property type="entry name" value="Xaa-pro aminopeptidase P"/>
    <property type="match status" value="1"/>
</dbReference>
<dbReference type="Gene3D" id="3.90.230.10">
    <property type="entry name" value="Creatinase/methionine aminopeptidase superfamily"/>
    <property type="match status" value="1"/>
</dbReference>
<dbReference type="Gene3D" id="3.40.350.10">
    <property type="entry name" value="Creatinase/prolidase N-terminal domain"/>
    <property type="match status" value="2"/>
</dbReference>
<dbReference type="InterPro" id="IPR029149">
    <property type="entry name" value="Creatin/AminoP/Spt16_N"/>
</dbReference>
<dbReference type="InterPro" id="IPR036005">
    <property type="entry name" value="Creatinase/aminopeptidase-like"/>
</dbReference>
<dbReference type="InterPro" id="IPR000587">
    <property type="entry name" value="Creatinase_N"/>
</dbReference>
<dbReference type="InterPro" id="IPR000994">
    <property type="entry name" value="Pept_M24"/>
</dbReference>
<dbReference type="InterPro" id="IPR033740">
    <property type="entry name" value="Pept_M24B"/>
</dbReference>
<dbReference type="InterPro" id="IPR032416">
    <property type="entry name" value="Peptidase_M24_C"/>
</dbReference>
<dbReference type="InterPro" id="IPR001131">
    <property type="entry name" value="Peptidase_M24B_aminopep-P_CS"/>
</dbReference>
<dbReference type="InterPro" id="IPR050422">
    <property type="entry name" value="X-Pro_aminopeptidase_P"/>
</dbReference>
<dbReference type="PANTHER" id="PTHR43763">
    <property type="entry name" value="XAA-PRO AMINOPEPTIDASE 1"/>
    <property type="match status" value="1"/>
</dbReference>
<dbReference type="PANTHER" id="PTHR43763:SF6">
    <property type="entry name" value="XAA-PRO AMINOPEPTIDASE 1"/>
    <property type="match status" value="1"/>
</dbReference>
<dbReference type="Pfam" id="PF01321">
    <property type="entry name" value="Creatinase_N"/>
    <property type="match status" value="1"/>
</dbReference>
<dbReference type="Pfam" id="PF16189">
    <property type="entry name" value="Creatinase_N_2"/>
    <property type="match status" value="1"/>
</dbReference>
<dbReference type="Pfam" id="PF00557">
    <property type="entry name" value="Peptidase_M24"/>
    <property type="match status" value="1"/>
</dbReference>
<dbReference type="Pfam" id="PF16188">
    <property type="entry name" value="Peptidase_M24_C"/>
    <property type="match status" value="1"/>
</dbReference>
<dbReference type="SUPFAM" id="SSF55920">
    <property type="entry name" value="Creatinase/aminopeptidase"/>
    <property type="match status" value="1"/>
</dbReference>
<dbReference type="SUPFAM" id="SSF53092">
    <property type="entry name" value="Creatinase/prolidase N-terminal domain"/>
    <property type="match status" value="1"/>
</dbReference>
<dbReference type="PROSITE" id="PS00491">
    <property type="entry name" value="PROLINE_PEPTIDASE"/>
    <property type="match status" value="1"/>
</dbReference>